<reference key="1">
    <citation type="journal article" date="2005" name="J. Bacteriol.">
        <title>Whole-genome sequence analysis of Pseudomonas syringae pv. phaseolicola 1448A reveals divergence among pathovars in genes involved in virulence and transposition.</title>
        <authorList>
            <person name="Joardar V."/>
            <person name="Lindeberg M."/>
            <person name="Jackson R.W."/>
            <person name="Selengut J."/>
            <person name="Dodson R."/>
            <person name="Brinkac L.M."/>
            <person name="Daugherty S.C."/>
            <person name="DeBoy R.T."/>
            <person name="Durkin A.S."/>
            <person name="Gwinn Giglio M."/>
            <person name="Madupu R."/>
            <person name="Nelson W.C."/>
            <person name="Rosovitz M.J."/>
            <person name="Sullivan S.A."/>
            <person name="Crabtree J."/>
            <person name="Creasy T."/>
            <person name="Davidsen T.M."/>
            <person name="Haft D.H."/>
            <person name="Zafar N."/>
            <person name="Zhou L."/>
            <person name="Halpin R."/>
            <person name="Holley T."/>
            <person name="Khouri H.M."/>
            <person name="Feldblyum T.V."/>
            <person name="White O."/>
            <person name="Fraser C.M."/>
            <person name="Chatterjee A.K."/>
            <person name="Cartinhour S."/>
            <person name="Schneider D."/>
            <person name="Mansfield J.W."/>
            <person name="Collmer A."/>
            <person name="Buell R."/>
        </authorList>
    </citation>
    <scope>NUCLEOTIDE SEQUENCE [LARGE SCALE GENOMIC DNA]</scope>
    <source>
        <strain>1448A / Race 6</strain>
    </source>
</reference>
<organism>
    <name type="scientific">Pseudomonas savastanoi pv. phaseolicola (strain 1448A / Race 6)</name>
    <name type="common">Pseudomonas syringae pv. phaseolicola (strain 1448A / Race 6)</name>
    <dbReference type="NCBI Taxonomy" id="264730"/>
    <lineage>
        <taxon>Bacteria</taxon>
        <taxon>Pseudomonadati</taxon>
        <taxon>Pseudomonadota</taxon>
        <taxon>Gammaproteobacteria</taxon>
        <taxon>Pseudomonadales</taxon>
        <taxon>Pseudomonadaceae</taxon>
        <taxon>Pseudomonas</taxon>
    </lineage>
</organism>
<name>RECO_PSE14</name>
<accession>Q48EV5</accession>
<sequence length="227" mass="24928">MSAPTGQPAYVLHSRAYRENSALVDFLTPQGRLRAVLRSAKGKAGSLARPFVPLEVEFRGRGELKNVGRMESAGVATWMTGEALFSGMYLNELLIRLLPAEDPHPAVFEHYAATLLALALGRPLEPLLRSFEWRLLDDLGYGFAMDADINGEPLAIDGMYRLQVDAGLERVYLLQPGLFQGAELLAMSEADWSVPGALSAAKRLMRQALAVHLGGRPLVSRELFRKP</sequence>
<protein>
    <recommendedName>
        <fullName evidence="1">DNA repair protein RecO</fullName>
    </recommendedName>
    <alternativeName>
        <fullName evidence="1">Recombination protein O</fullName>
    </alternativeName>
</protein>
<dbReference type="EMBL" id="CP000058">
    <property type="protein sequence ID" value="AAZ32964.1"/>
    <property type="molecule type" value="Genomic_DNA"/>
</dbReference>
<dbReference type="RefSeq" id="WP_002554904.1">
    <property type="nucleotide sequence ID" value="NC_005773.3"/>
</dbReference>
<dbReference type="SMR" id="Q48EV5"/>
<dbReference type="GeneID" id="69860997"/>
<dbReference type="KEGG" id="psp:PSPPH_3946"/>
<dbReference type="eggNOG" id="COG1381">
    <property type="taxonomic scope" value="Bacteria"/>
</dbReference>
<dbReference type="HOGENOM" id="CLU_066645_1_0_6"/>
<dbReference type="Proteomes" id="UP000000551">
    <property type="component" value="Chromosome"/>
</dbReference>
<dbReference type="GO" id="GO:0043590">
    <property type="term" value="C:bacterial nucleoid"/>
    <property type="evidence" value="ECO:0007669"/>
    <property type="project" value="TreeGrafter"/>
</dbReference>
<dbReference type="GO" id="GO:0006310">
    <property type="term" value="P:DNA recombination"/>
    <property type="evidence" value="ECO:0007669"/>
    <property type="project" value="UniProtKB-UniRule"/>
</dbReference>
<dbReference type="GO" id="GO:0006302">
    <property type="term" value="P:double-strand break repair"/>
    <property type="evidence" value="ECO:0007669"/>
    <property type="project" value="TreeGrafter"/>
</dbReference>
<dbReference type="Gene3D" id="2.40.50.140">
    <property type="entry name" value="Nucleic acid-binding proteins"/>
    <property type="match status" value="1"/>
</dbReference>
<dbReference type="Gene3D" id="1.20.1440.120">
    <property type="entry name" value="Recombination protein O, C-terminal domain"/>
    <property type="match status" value="1"/>
</dbReference>
<dbReference type="HAMAP" id="MF_00201">
    <property type="entry name" value="RecO"/>
    <property type="match status" value="1"/>
</dbReference>
<dbReference type="InterPro" id="IPR037278">
    <property type="entry name" value="ARFGAP/RecO"/>
</dbReference>
<dbReference type="InterPro" id="IPR022572">
    <property type="entry name" value="DNA_rep/recomb_RecO_N"/>
</dbReference>
<dbReference type="InterPro" id="IPR012340">
    <property type="entry name" value="NA-bd_OB-fold"/>
</dbReference>
<dbReference type="InterPro" id="IPR003717">
    <property type="entry name" value="RecO"/>
</dbReference>
<dbReference type="InterPro" id="IPR042242">
    <property type="entry name" value="RecO_C"/>
</dbReference>
<dbReference type="NCBIfam" id="TIGR00613">
    <property type="entry name" value="reco"/>
    <property type="match status" value="1"/>
</dbReference>
<dbReference type="PANTHER" id="PTHR33991">
    <property type="entry name" value="DNA REPAIR PROTEIN RECO"/>
    <property type="match status" value="1"/>
</dbReference>
<dbReference type="PANTHER" id="PTHR33991:SF1">
    <property type="entry name" value="DNA REPAIR PROTEIN RECO"/>
    <property type="match status" value="1"/>
</dbReference>
<dbReference type="Pfam" id="PF02565">
    <property type="entry name" value="RecO_C"/>
    <property type="match status" value="1"/>
</dbReference>
<dbReference type="Pfam" id="PF11967">
    <property type="entry name" value="RecO_N"/>
    <property type="match status" value="1"/>
</dbReference>
<dbReference type="SUPFAM" id="SSF57863">
    <property type="entry name" value="ArfGap/RecO-like zinc finger"/>
    <property type="match status" value="1"/>
</dbReference>
<dbReference type="SUPFAM" id="SSF50249">
    <property type="entry name" value="Nucleic acid-binding proteins"/>
    <property type="match status" value="1"/>
</dbReference>
<proteinExistence type="inferred from homology"/>
<keyword id="KW-0227">DNA damage</keyword>
<keyword id="KW-0233">DNA recombination</keyword>
<keyword id="KW-0234">DNA repair</keyword>
<comment type="function">
    <text evidence="1">Involved in DNA repair and RecF pathway recombination.</text>
</comment>
<comment type="similarity">
    <text evidence="1">Belongs to the RecO family.</text>
</comment>
<feature type="chain" id="PRO_0000227049" description="DNA repair protein RecO">
    <location>
        <begin position="1"/>
        <end position="227"/>
    </location>
</feature>
<gene>
    <name evidence="1" type="primary">recO</name>
    <name type="ordered locus">PSPPH_3946</name>
</gene>
<evidence type="ECO:0000255" key="1">
    <source>
        <dbReference type="HAMAP-Rule" id="MF_00201"/>
    </source>
</evidence>